<accession>Q2NJN5</accession>
<feature type="chain" id="PRO_0000293239" description="Small ribosomal subunit protein uS4">
    <location>
        <begin position="1"/>
        <end position="198"/>
    </location>
</feature>
<feature type="domain" description="S4 RNA-binding" evidence="1">
    <location>
        <begin position="91"/>
        <end position="154"/>
    </location>
</feature>
<proteinExistence type="inferred from homology"/>
<keyword id="KW-0687">Ribonucleoprotein</keyword>
<keyword id="KW-0689">Ribosomal protein</keyword>
<keyword id="KW-0694">RNA-binding</keyword>
<keyword id="KW-0699">rRNA-binding</keyword>
<name>RS4_AYWBP</name>
<comment type="function">
    <text evidence="1">One of the primary rRNA binding proteins, it binds directly to 16S rRNA where it nucleates assembly of the body of the 30S subunit.</text>
</comment>
<comment type="function">
    <text evidence="1">With S5 and S12 plays an important role in translational accuracy.</text>
</comment>
<comment type="subunit">
    <text evidence="1">Part of the 30S ribosomal subunit. Contacts protein S5. The interaction surface between S4 and S5 is involved in control of translational fidelity.</text>
</comment>
<comment type="similarity">
    <text evidence="1">Belongs to the universal ribosomal protein uS4 family.</text>
</comment>
<sequence>MSRYTGSLWKVSRRLNYSVSETGKELHKRAYGPGQHGQKKVKLSDYGFQLQEKQKLRFTYGVSEKQFRKTFDNASKLKGIHGEMFLVLLESRLDNVVYRLGFAKTRAQARQLVNHGHILVDGKKVDIASYRLKPGQTVTLREKSKNLNIVQEALNSKFVRADYVSLDKELVGKYVRYPQRNEFLPDINEQLIVEYYNR</sequence>
<organism>
    <name type="scientific">Aster yellows witches'-broom phytoplasma (strain AYWB)</name>
    <dbReference type="NCBI Taxonomy" id="322098"/>
    <lineage>
        <taxon>Bacteria</taxon>
        <taxon>Bacillati</taxon>
        <taxon>Mycoplasmatota</taxon>
        <taxon>Mollicutes</taxon>
        <taxon>Acholeplasmatales</taxon>
        <taxon>Acholeplasmataceae</taxon>
        <taxon>Candidatus Phytoplasma</taxon>
        <taxon>16SrI (Aster yellows group)</taxon>
    </lineage>
</organism>
<reference key="1">
    <citation type="journal article" date="2006" name="J. Bacteriol.">
        <title>Living with genome instability: the adaptation of phytoplasmas to diverse environments of their insect and plant hosts.</title>
        <authorList>
            <person name="Bai X."/>
            <person name="Zhang J."/>
            <person name="Ewing A."/>
            <person name="Miller S.A."/>
            <person name="Jancso Radek A."/>
            <person name="Shevchenko D.V."/>
            <person name="Tsukerman K."/>
            <person name="Walunas T."/>
            <person name="Lapidus A."/>
            <person name="Campbell J.W."/>
            <person name="Hogenhout S.A."/>
        </authorList>
    </citation>
    <scope>NUCLEOTIDE SEQUENCE [LARGE SCALE GENOMIC DNA]</scope>
    <source>
        <strain>AYWB</strain>
    </source>
</reference>
<evidence type="ECO:0000255" key="1">
    <source>
        <dbReference type="HAMAP-Rule" id="MF_01306"/>
    </source>
</evidence>
<evidence type="ECO:0000305" key="2"/>
<gene>
    <name evidence="1" type="primary">rpsD</name>
    <name type="ordered locus">AYWB_241</name>
</gene>
<protein>
    <recommendedName>
        <fullName evidence="1">Small ribosomal subunit protein uS4</fullName>
    </recommendedName>
    <alternativeName>
        <fullName evidence="2">30S ribosomal protein S4</fullName>
    </alternativeName>
</protein>
<dbReference type="EMBL" id="CP000061">
    <property type="protein sequence ID" value="ABC65358.1"/>
    <property type="molecule type" value="Genomic_DNA"/>
</dbReference>
<dbReference type="RefSeq" id="WP_011412523.1">
    <property type="nucleotide sequence ID" value="NC_007716.1"/>
</dbReference>
<dbReference type="SMR" id="Q2NJN5"/>
<dbReference type="STRING" id="322098.AYWB_241"/>
<dbReference type="KEGG" id="ayw:AYWB_241"/>
<dbReference type="eggNOG" id="COG0522">
    <property type="taxonomic scope" value="Bacteria"/>
</dbReference>
<dbReference type="HOGENOM" id="CLU_092403_0_1_14"/>
<dbReference type="OrthoDB" id="9803672at2"/>
<dbReference type="PhylomeDB" id="Q2NJN5"/>
<dbReference type="Proteomes" id="UP000001934">
    <property type="component" value="Chromosome"/>
</dbReference>
<dbReference type="GO" id="GO:0015935">
    <property type="term" value="C:small ribosomal subunit"/>
    <property type="evidence" value="ECO:0007669"/>
    <property type="project" value="InterPro"/>
</dbReference>
<dbReference type="GO" id="GO:0019843">
    <property type="term" value="F:rRNA binding"/>
    <property type="evidence" value="ECO:0007669"/>
    <property type="project" value="UniProtKB-UniRule"/>
</dbReference>
<dbReference type="GO" id="GO:0003735">
    <property type="term" value="F:structural constituent of ribosome"/>
    <property type="evidence" value="ECO:0007669"/>
    <property type="project" value="InterPro"/>
</dbReference>
<dbReference type="GO" id="GO:0042274">
    <property type="term" value="P:ribosomal small subunit biogenesis"/>
    <property type="evidence" value="ECO:0007669"/>
    <property type="project" value="TreeGrafter"/>
</dbReference>
<dbReference type="GO" id="GO:0006412">
    <property type="term" value="P:translation"/>
    <property type="evidence" value="ECO:0007669"/>
    <property type="project" value="UniProtKB-UniRule"/>
</dbReference>
<dbReference type="CDD" id="cd00165">
    <property type="entry name" value="S4"/>
    <property type="match status" value="1"/>
</dbReference>
<dbReference type="FunFam" id="3.10.290.10:FF:000001">
    <property type="entry name" value="30S ribosomal protein S4"/>
    <property type="match status" value="1"/>
</dbReference>
<dbReference type="Gene3D" id="1.10.1050.10">
    <property type="entry name" value="Ribosomal Protein S4 Delta 41, Chain A, domain 1"/>
    <property type="match status" value="1"/>
</dbReference>
<dbReference type="Gene3D" id="3.10.290.10">
    <property type="entry name" value="RNA-binding S4 domain"/>
    <property type="match status" value="1"/>
</dbReference>
<dbReference type="HAMAP" id="MF_01306_B">
    <property type="entry name" value="Ribosomal_uS4_B"/>
    <property type="match status" value="1"/>
</dbReference>
<dbReference type="InterPro" id="IPR022801">
    <property type="entry name" value="Ribosomal_uS4"/>
</dbReference>
<dbReference type="InterPro" id="IPR005709">
    <property type="entry name" value="Ribosomal_uS4_bac-type"/>
</dbReference>
<dbReference type="InterPro" id="IPR018079">
    <property type="entry name" value="Ribosomal_uS4_CS"/>
</dbReference>
<dbReference type="InterPro" id="IPR001912">
    <property type="entry name" value="Ribosomal_uS4_N"/>
</dbReference>
<dbReference type="InterPro" id="IPR002942">
    <property type="entry name" value="S4_RNA-bd"/>
</dbReference>
<dbReference type="InterPro" id="IPR036986">
    <property type="entry name" value="S4_RNA-bd_sf"/>
</dbReference>
<dbReference type="NCBIfam" id="NF003717">
    <property type="entry name" value="PRK05327.1"/>
    <property type="match status" value="1"/>
</dbReference>
<dbReference type="NCBIfam" id="TIGR01017">
    <property type="entry name" value="rpsD_bact"/>
    <property type="match status" value="1"/>
</dbReference>
<dbReference type="PANTHER" id="PTHR11831">
    <property type="entry name" value="30S 40S RIBOSOMAL PROTEIN"/>
    <property type="match status" value="1"/>
</dbReference>
<dbReference type="PANTHER" id="PTHR11831:SF4">
    <property type="entry name" value="SMALL RIBOSOMAL SUBUNIT PROTEIN US4M"/>
    <property type="match status" value="1"/>
</dbReference>
<dbReference type="Pfam" id="PF00163">
    <property type="entry name" value="Ribosomal_S4"/>
    <property type="match status" value="1"/>
</dbReference>
<dbReference type="Pfam" id="PF01479">
    <property type="entry name" value="S4"/>
    <property type="match status" value="1"/>
</dbReference>
<dbReference type="SMART" id="SM01390">
    <property type="entry name" value="Ribosomal_S4"/>
    <property type="match status" value="1"/>
</dbReference>
<dbReference type="SMART" id="SM00363">
    <property type="entry name" value="S4"/>
    <property type="match status" value="1"/>
</dbReference>
<dbReference type="SUPFAM" id="SSF55174">
    <property type="entry name" value="Alpha-L RNA-binding motif"/>
    <property type="match status" value="1"/>
</dbReference>
<dbReference type="PROSITE" id="PS00632">
    <property type="entry name" value="RIBOSOMAL_S4"/>
    <property type="match status" value="1"/>
</dbReference>
<dbReference type="PROSITE" id="PS50889">
    <property type="entry name" value="S4"/>
    <property type="match status" value="1"/>
</dbReference>